<name>MF14A_HUMAN</name>
<keyword id="KW-0007">Acetylation</keyword>
<keyword id="KW-0325">Glycoprotein</keyword>
<keyword id="KW-0472">Membrane</keyword>
<keyword id="KW-1267">Proteomics identification</keyword>
<keyword id="KW-1185">Reference proteome</keyword>
<keyword id="KW-0812">Transmembrane</keyword>
<keyword id="KW-1133">Transmembrane helix</keyword>
<keyword id="KW-0813">Transport</keyword>
<accession>Q96MC6</accession>
<accession>Q6P2N7</accession>
<accession>Q8N8K2</accession>
<accession>Q8NBV3</accession>
<accession>Q96NY0</accession>
<accession>Q9NT25</accession>
<gene>
    <name evidence="5" type="primary">MFSD14A</name>
    <name evidence="5" type="synonym">HIAT1</name>
</gene>
<evidence type="ECO:0000255" key="1"/>
<evidence type="ECO:0000256" key="2">
    <source>
        <dbReference type="SAM" id="MobiDB-lite"/>
    </source>
</evidence>
<evidence type="ECO:0000269" key="3">
    <source>
    </source>
</evidence>
<evidence type="ECO:0000305" key="4"/>
<evidence type="ECO:0000312" key="5">
    <source>
        <dbReference type="HGNC" id="HGNC:23363"/>
    </source>
</evidence>
<proteinExistence type="evidence at protein level"/>
<organism>
    <name type="scientific">Homo sapiens</name>
    <name type="common">Human</name>
    <dbReference type="NCBI Taxonomy" id="9606"/>
    <lineage>
        <taxon>Eukaryota</taxon>
        <taxon>Metazoa</taxon>
        <taxon>Chordata</taxon>
        <taxon>Craniata</taxon>
        <taxon>Vertebrata</taxon>
        <taxon>Euteleostomi</taxon>
        <taxon>Mammalia</taxon>
        <taxon>Eutheria</taxon>
        <taxon>Euarchontoglires</taxon>
        <taxon>Primates</taxon>
        <taxon>Haplorrhini</taxon>
        <taxon>Catarrhini</taxon>
        <taxon>Hominidae</taxon>
        <taxon>Homo</taxon>
    </lineage>
</organism>
<reference key="1">
    <citation type="journal article" date="2004" name="Nat. Genet.">
        <title>Complete sequencing and characterization of 21,243 full-length human cDNAs.</title>
        <authorList>
            <person name="Ota T."/>
            <person name="Suzuki Y."/>
            <person name="Nishikawa T."/>
            <person name="Otsuki T."/>
            <person name="Sugiyama T."/>
            <person name="Irie R."/>
            <person name="Wakamatsu A."/>
            <person name="Hayashi K."/>
            <person name="Sato H."/>
            <person name="Nagai K."/>
            <person name="Kimura K."/>
            <person name="Makita H."/>
            <person name="Sekine M."/>
            <person name="Obayashi M."/>
            <person name="Nishi T."/>
            <person name="Shibahara T."/>
            <person name="Tanaka T."/>
            <person name="Ishii S."/>
            <person name="Yamamoto J."/>
            <person name="Saito K."/>
            <person name="Kawai Y."/>
            <person name="Isono Y."/>
            <person name="Nakamura Y."/>
            <person name="Nagahari K."/>
            <person name="Murakami K."/>
            <person name="Yasuda T."/>
            <person name="Iwayanagi T."/>
            <person name="Wagatsuma M."/>
            <person name="Shiratori A."/>
            <person name="Sudo H."/>
            <person name="Hosoiri T."/>
            <person name="Kaku Y."/>
            <person name="Kodaira H."/>
            <person name="Kondo H."/>
            <person name="Sugawara M."/>
            <person name="Takahashi M."/>
            <person name="Kanda K."/>
            <person name="Yokoi T."/>
            <person name="Furuya T."/>
            <person name="Kikkawa E."/>
            <person name="Omura Y."/>
            <person name="Abe K."/>
            <person name="Kamihara K."/>
            <person name="Katsuta N."/>
            <person name="Sato K."/>
            <person name="Tanikawa M."/>
            <person name="Yamazaki M."/>
            <person name="Ninomiya K."/>
            <person name="Ishibashi T."/>
            <person name="Yamashita H."/>
            <person name="Murakawa K."/>
            <person name="Fujimori K."/>
            <person name="Tanai H."/>
            <person name="Kimata M."/>
            <person name="Watanabe M."/>
            <person name="Hiraoka S."/>
            <person name="Chiba Y."/>
            <person name="Ishida S."/>
            <person name="Ono Y."/>
            <person name="Takiguchi S."/>
            <person name="Watanabe S."/>
            <person name="Yosida M."/>
            <person name="Hotuta T."/>
            <person name="Kusano J."/>
            <person name="Kanehori K."/>
            <person name="Takahashi-Fujii A."/>
            <person name="Hara H."/>
            <person name="Tanase T.-O."/>
            <person name="Nomura Y."/>
            <person name="Togiya S."/>
            <person name="Komai F."/>
            <person name="Hara R."/>
            <person name="Takeuchi K."/>
            <person name="Arita M."/>
            <person name="Imose N."/>
            <person name="Musashino K."/>
            <person name="Yuuki H."/>
            <person name="Oshima A."/>
            <person name="Sasaki N."/>
            <person name="Aotsuka S."/>
            <person name="Yoshikawa Y."/>
            <person name="Matsunawa H."/>
            <person name="Ichihara T."/>
            <person name="Shiohata N."/>
            <person name="Sano S."/>
            <person name="Moriya S."/>
            <person name="Momiyama H."/>
            <person name="Satoh N."/>
            <person name="Takami S."/>
            <person name="Terashima Y."/>
            <person name="Suzuki O."/>
            <person name="Nakagawa S."/>
            <person name="Senoh A."/>
            <person name="Mizoguchi H."/>
            <person name="Goto Y."/>
            <person name="Shimizu F."/>
            <person name="Wakebe H."/>
            <person name="Hishigaki H."/>
            <person name="Watanabe T."/>
            <person name="Sugiyama A."/>
            <person name="Takemoto M."/>
            <person name="Kawakami B."/>
            <person name="Yamazaki M."/>
            <person name="Watanabe K."/>
            <person name="Kumagai A."/>
            <person name="Itakura S."/>
            <person name="Fukuzumi Y."/>
            <person name="Fujimori Y."/>
            <person name="Komiyama M."/>
            <person name="Tashiro H."/>
            <person name="Tanigami A."/>
            <person name="Fujiwara T."/>
            <person name="Ono T."/>
            <person name="Yamada K."/>
            <person name="Fujii Y."/>
            <person name="Ozaki K."/>
            <person name="Hirao M."/>
            <person name="Ohmori Y."/>
            <person name="Kawabata A."/>
            <person name="Hikiji T."/>
            <person name="Kobatake N."/>
            <person name="Inagaki H."/>
            <person name="Ikema Y."/>
            <person name="Okamoto S."/>
            <person name="Okitani R."/>
            <person name="Kawakami T."/>
            <person name="Noguchi S."/>
            <person name="Itoh T."/>
            <person name="Shigeta K."/>
            <person name="Senba T."/>
            <person name="Matsumura K."/>
            <person name="Nakajima Y."/>
            <person name="Mizuno T."/>
            <person name="Morinaga M."/>
            <person name="Sasaki M."/>
            <person name="Togashi T."/>
            <person name="Oyama M."/>
            <person name="Hata H."/>
            <person name="Watanabe M."/>
            <person name="Komatsu T."/>
            <person name="Mizushima-Sugano J."/>
            <person name="Satoh T."/>
            <person name="Shirai Y."/>
            <person name="Takahashi Y."/>
            <person name="Nakagawa K."/>
            <person name="Okumura K."/>
            <person name="Nagase T."/>
            <person name="Nomura N."/>
            <person name="Kikuchi H."/>
            <person name="Masuho Y."/>
            <person name="Yamashita R."/>
            <person name="Nakai K."/>
            <person name="Yada T."/>
            <person name="Nakamura Y."/>
            <person name="Ohara O."/>
            <person name="Isogai T."/>
            <person name="Sugano S."/>
        </authorList>
    </citation>
    <scope>NUCLEOTIDE SEQUENCE [LARGE SCALE MRNA]</scope>
    <source>
        <tissue>Stomach</tissue>
    </source>
</reference>
<reference key="2">
    <citation type="submission" date="2001-10" db="EMBL/GenBank/DDBJ databases">
        <title>Lexicon Genetics incorporated full-length cloning.</title>
        <authorList>
            <person name="Mathur B.N."/>
            <person name="Turner C.A. Jr."/>
        </authorList>
    </citation>
    <scope>NUCLEOTIDE SEQUENCE [MRNA]</scope>
</reference>
<reference key="3">
    <citation type="journal article" date="2007" name="BMC Genomics">
        <title>The full-ORF clone resource of the German cDNA consortium.</title>
        <authorList>
            <person name="Bechtel S."/>
            <person name="Rosenfelder H."/>
            <person name="Duda A."/>
            <person name="Schmidt C.P."/>
            <person name="Ernst U."/>
            <person name="Wellenreuther R."/>
            <person name="Mehrle A."/>
            <person name="Schuster C."/>
            <person name="Bahr A."/>
            <person name="Bloecker H."/>
            <person name="Heubner D."/>
            <person name="Hoerlein A."/>
            <person name="Michel G."/>
            <person name="Wedler H."/>
            <person name="Koehrer K."/>
            <person name="Ottenwaelder B."/>
            <person name="Poustka A."/>
            <person name="Wiemann S."/>
            <person name="Schupp I."/>
        </authorList>
    </citation>
    <scope>NUCLEOTIDE SEQUENCE [LARGE SCALE MRNA] OF 304-490</scope>
    <source>
        <tissue>Brain</tissue>
    </source>
</reference>
<reference key="4">
    <citation type="journal article" date="2004" name="Genome Res.">
        <title>The status, quality, and expansion of the NIH full-length cDNA project: the Mammalian Gene Collection (MGC).</title>
        <authorList>
            <consortium name="The MGC Project Team"/>
        </authorList>
    </citation>
    <scope>NUCLEOTIDE SEQUENCE [LARGE SCALE MRNA] OF 116-490</scope>
    <source>
        <tissue>Duodenum</tissue>
    </source>
</reference>
<reference key="5">
    <citation type="journal article" date="2015" name="Cell Rep.">
        <title>An organellar nalpha-acetyltransferase, naa60, acetylates cytosolic N termini of transmembrane proteins and maintains Golgi integrity.</title>
        <authorList>
            <person name="Aksnes H."/>
            <person name="Van Damme P."/>
            <person name="Goris M."/>
            <person name="Starheim K.K."/>
            <person name="Marie M."/>
            <person name="Stoeve S.I."/>
            <person name="Hoel C."/>
            <person name="Kalvik T.V."/>
            <person name="Hole K."/>
            <person name="Glomnes N."/>
            <person name="Furnes C."/>
            <person name="Ljostveit S."/>
            <person name="Ziegler M."/>
            <person name="Niere M."/>
            <person name="Gevaert K."/>
            <person name="Arnesen T."/>
        </authorList>
    </citation>
    <scope>ACETYLATION AT MET-1</scope>
</reference>
<protein>
    <recommendedName>
        <fullName evidence="5">Hippocampus abundant transcript 1 protein</fullName>
    </recommendedName>
    <alternativeName>
        <fullName evidence="5">Major facilitator superfamily domain-containing 14A</fullName>
    </alternativeName>
    <alternativeName>
        <fullName>Putative tetracycline transporter-like protein</fullName>
    </alternativeName>
</protein>
<comment type="subcellular location">
    <subcellularLocation>
        <location evidence="4">Membrane</location>
        <topology evidence="4">Multi-pass membrane protein</topology>
    </subcellularLocation>
</comment>
<comment type="similarity">
    <text evidence="4">Belongs to the major facilitator superfamily.</text>
</comment>
<comment type="sequence caution" evidence="4">
    <conflict type="erroneous initiation">
        <sequence resource="EMBL-CDS" id="BAC04836"/>
    </conflict>
</comment>
<comment type="sequence caution" evidence="4">
    <conflict type="erroneous initiation">
        <sequence resource="EMBL-CDS" id="BAC11473"/>
    </conflict>
</comment>
<sequence>MTQGKKKKRAANRSIMLAKKIIIKDGGTPQGIGSPSVYHAVIVIFLEFFAWGLLTAPTLVVLHETFPKHTFLMNGLIQGVKGLLSFLSAPLIGALSDVWGRKSFLLLTVFFTCAPIPLMKISPWWYFAVISVSGVFAVTFSVVFAYVADITQEHERSMAYGLVSATFAASLVTSPAIGAYLGRVYGDSLVVVLATAIALLDICFILVAVPESLPEKMRPASWGAPISWEQADPFASLKKVGQDSIVLLICITVFLSYLPEAGQYSSFFLYLRQIMKFSPESVAAFIAVLGILSIIAQTIVLSLLMRSIGNKNTILLGLGFQILQLAWYGFGSEPWMMWAAGAVAAMSSITFPAVSALVSRTADADQQGVVQGMITGIRGLCNGLGPALYGFIFYIFHVELKELPITGTDLGTNTSPQHHFEQNSIIPGPPFLFGACSVLLALLVALFIPEHTNLSLRSSSWRKHCGSHSHPHNTQAPGEAKEPLLQDTNV</sequence>
<dbReference type="EMBL" id="AK057172">
    <property type="protein sequence ID" value="BAB71375.1"/>
    <property type="molecule type" value="mRNA"/>
</dbReference>
<dbReference type="EMBL" id="AK075208">
    <property type="protein sequence ID" value="BAC11473.1"/>
    <property type="status" value="ALT_INIT"/>
    <property type="molecule type" value="mRNA"/>
</dbReference>
<dbReference type="EMBL" id="AK096669">
    <property type="protein sequence ID" value="BAC04836.1"/>
    <property type="status" value="ALT_INIT"/>
    <property type="molecule type" value="mRNA"/>
</dbReference>
<dbReference type="EMBL" id="AF427492">
    <property type="protein sequence ID" value="AAL25115.1"/>
    <property type="molecule type" value="mRNA"/>
</dbReference>
<dbReference type="EMBL" id="AL137576">
    <property type="protein sequence ID" value="CAB70819.2"/>
    <property type="molecule type" value="mRNA"/>
</dbReference>
<dbReference type="EMBL" id="BC064409">
    <property type="protein sequence ID" value="AAH64409.1"/>
    <property type="molecule type" value="mRNA"/>
</dbReference>
<dbReference type="CCDS" id="CCDS763.1"/>
<dbReference type="PIR" id="T46272">
    <property type="entry name" value="T46272"/>
</dbReference>
<dbReference type="RefSeq" id="NP_149044.2">
    <property type="nucleotide sequence ID" value="NM_033055.2"/>
</dbReference>
<dbReference type="SMR" id="Q96MC6"/>
<dbReference type="BioGRID" id="122223">
    <property type="interactions" value="6"/>
</dbReference>
<dbReference type="FunCoup" id="Q96MC6">
    <property type="interactions" value="2847"/>
</dbReference>
<dbReference type="IntAct" id="Q96MC6">
    <property type="interactions" value="1"/>
</dbReference>
<dbReference type="MINT" id="Q96MC6"/>
<dbReference type="STRING" id="9606.ENSP00000359171"/>
<dbReference type="TCDB" id="2.A.1.2.104">
    <property type="family name" value="the major facilitator superfamily (mfs)"/>
</dbReference>
<dbReference type="GlyCosmos" id="Q96MC6">
    <property type="glycosylation" value="2 sites, No reported glycans"/>
</dbReference>
<dbReference type="GlyGen" id="Q96MC6">
    <property type="glycosylation" value="2 sites"/>
</dbReference>
<dbReference type="iPTMnet" id="Q96MC6"/>
<dbReference type="PhosphoSitePlus" id="Q96MC6"/>
<dbReference type="SwissPalm" id="Q96MC6"/>
<dbReference type="BioMuta" id="MFSD14A"/>
<dbReference type="DMDM" id="54036072"/>
<dbReference type="jPOST" id="Q96MC6"/>
<dbReference type="MassIVE" id="Q96MC6"/>
<dbReference type="PaxDb" id="9606-ENSP00000359171"/>
<dbReference type="PeptideAtlas" id="Q96MC6"/>
<dbReference type="ProteomicsDB" id="77333"/>
<dbReference type="Antibodypedia" id="53425">
    <property type="antibodies" value="91 antibodies from 14 providers"/>
</dbReference>
<dbReference type="DNASU" id="64645"/>
<dbReference type="Ensembl" id="ENST00000370152.8">
    <property type="protein sequence ID" value="ENSP00000359171.3"/>
    <property type="gene ID" value="ENSG00000156875.14"/>
</dbReference>
<dbReference type="GeneID" id="64645"/>
<dbReference type="KEGG" id="hsa:64645"/>
<dbReference type="MANE-Select" id="ENST00000370152.8">
    <property type="protein sequence ID" value="ENSP00000359171.3"/>
    <property type="RefSeq nucleotide sequence ID" value="NM_033055.3"/>
    <property type="RefSeq protein sequence ID" value="NP_149044.2"/>
</dbReference>
<dbReference type="UCSC" id="uc001dst.4">
    <property type="organism name" value="human"/>
</dbReference>
<dbReference type="AGR" id="HGNC:23363"/>
<dbReference type="CTD" id="64645"/>
<dbReference type="DisGeNET" id="64645"/>
<dbReference type="GeneCards" id="MFSD14A"/>
<dbReference type="HGNC" id="HGNC:23363">
    <property type="gene designation" value="MFSD14A"/>
</dbReference>
<dbReference type="HPA" id="ENSG00000156875">
    <property type="expression patterns" value="Tissue enhanced (parathyroid)"/>
</dbReference>
<dbReference type="MIM" id="620347">
    <property type="type" value="gene"/>
</dbReference>
<dbReference type="neXtProt" id="NX_Q96MC6"/>
<dbReference type="OpenTargets" id="ENSG00000156875"/>
<dbReference type="PharmGKB" id="PA134910737"/>
<dbReference type="VEuPathDB" id="HostDB:ENSG00000156875"/>
<dbReference type="eggNOG" id="KOG2816">
    <property type="taxonomic scope" value="Eukaryota"/>
</dbReference>
<dbReference type="GeneTree" id="ENSGT00940000157395"/>
<dbReference type="HOGENOM" id="CLU_001265_10_5_1"/>
<dbReference type="InParanoid" id="Q96MC6"/>
<dbReference type="OMA" id="LGHLFMT"/>
<dbReference type="OrthoDB" id="419616at2759"/>
<dbReference type="PAN-GO" id="Q96MC6">
    <property type="GO annotations" value="0 GO annotations based on evolutionary models"/>
</dbReference>
<dbReference type="PhylomeDB" id="Q96MC6"/>
<dbReference type="TreeFam" id="TF313511"/>
<dbReference type="PathwayCommons" id="Q96MC6"/>
<dbReference type="SignaLink" id="Q96MC6"/>
<dbReference type="BioGRID-ORCS" id="64645">
    <property type="hits" value="18 hits in 1138 CRISPR screens"/>
</dbReference>
<dbReference type="ChiTaRS" id="MFSD14A">
    <property type="organism name" value="human"/>
</dbReference>
<dbReference type="GenomeRNAi" id="64645"/>
<dbReference type="Pharos" id="Q96MC6">
    <property type="development level" value="Tbio"/>
</dbReference>
<dbReference type="PRO" id="PR:Q96MC6"/>
<dbReference type="Proteomes" id="UP000005640">
    <property type="component" value="Chromosome 1"/>
</dbReference>
<dbReference type="RNAct" id="Q96MC6">
    <property type="molecule type" value="protein"/>
</dbReference>
<dbReference type="Bgee" id="ENSG00000156875">
    <property type="expression patterns" value="Expressed in smooth muscle tissue and 101 other cell types or tissues"/>
</dbReference>
<dbReference type="GO" id="GO:0016020">
    <property type="term" value="C:membrane"/>
    <property type="evidence" value="ECO:0007669"/>
    <property type="project" value="UniProtKB-SubCell"/>
</dbReference>
<dbReference type="GO" id="GO:0022857">
    <property type="term" value="F:transmembrane transporter activity"/>
    <property type="evidence" value="ECO:0007669"/>
    <property type="project" value="InterPro"/>
</dbReference>
<dbReference type="GO" id="GO:0001675">
    <property type="term" value="P:acrosome assembly"/>
    <property type="evidence" value="ECO:0007669"/>
    <property type="project" value="Ensembl"/>
</dbReference>
<dbReference type="GO" id="GO:0030382">
    <property type="term" value="P:sperm mitochondrion organization"/>
    <property type="evidence" value="ECO:0007669"/>
    <property type="project" value="Ensembl"/>
</dbReference>
<dbReference type="GO" id="GO:0007289">
    <property type="term" value="P:spermatid nucleus differentiation"/>
    <property type="evidence" value="ECO:0007669"/>
    <property type="project" value="Ensembl"/>
</dbReference>
<dbReference type="CDD" id="cd17387">
    <property type="entry name" value="MFS_MFSD14"/>
    <property type="match status" value="1"/>
</dbReference>
<dbReference type="FunFam" id="1.20.1250.20:FF:000099">
    <property type="entry name" value="Hippocampus abundant gene transcript 1"/>
    <property type="match status" value="1"/>
</dbReference>
<dbReference type="Gene3D" id="1.20.1250.20">
    <property type="entry name" value="MFS general substrate transporter like domains"/>
    <property type="match status" value="1"/>
</dbReference>
<dbReference type="InterPro" id="IPR011701">
    <property type="entry name" value="MFS"/>
</dbReference>
<dbReference type="InterPro" id="IPR020846">
    <property type="entry name" value="MFS_dom"/>
</dbReference>
<dbReference type="InterPro" id="IPR036259">
    <property type="entry name" value="MFS_trans_sf"/>
</dbReference>
<dbReference type="InterPro" id="IPR005829">
    <property type="entry name" value="Sugar_transporter_CS"/>
</dbReference>
<dbReference type="InterPro" id="IPR001958">
    <property type="entry name" value="Tet-R_TetA/multi-R_MdtG-like"/>
</dbReference>
<dbReference type="PANTHER" id="PTHR23504:SF77">
    <property type="entry name" value="HIPPOCAMPUS ABUNDANT TRANSCRIPT 1 PROTEIN"/>
    <property type="match status" value="1"/>
</dbReference>
<dbReference type="PANTHER" id="PTHR23504">
    <property type="entry name" value="MAJOR FACILITATOR SUPERFAMILY DOMAIN-CONTAINING PROTEIN 10"/>
    <property type="match status" value="1"/>
</dbReference>
<dbReference type="Pfam" id="PF07690">
    <property type="entry name" value="MFS_1"/>
    <property type="match status" value="1"/>
</dbReference>
<dbReference type="PRINTS" id="PR01035">
    <property type="entry name" value="TCRTETA"/>
</dbReference>
<dbReference type="SUPFAM" id="SSF103473">
    <property type="entry name" value="MFS general substrate transporter"/>
    <property type="match status" value="1"/>
</dbReference>
<dbReference type="PROSITE" id="PS50850">
    <property type="entry name" value="MFS"/>
    <property type="match status" value="1"/>
</dbReference>
<dbReference type="PROSITE" id="PS00216">
    <property type="entry name" value="SUGAR_TRANSPORT_1"/>
    <property type="match status" value="1"/>
</dbReference>
<feature type="chain" id="PRO_0000084856" description="Hippocampus abundant transcript 1 protein">
    <location>
        <begin position="1"/>
        <end position="490"/>
    </location>
</feature>
<feature type="topological domain" description="Extracellular" evidence="1">
    <location>
        <begin position="1"/>
        <end position="40"/>
    </location>
</feature>
<feature type="transmembrane region" description="Helical; Name=1" evidence="1">
    <location>
        <begin position="41"/>
        <end position="61"/>
    </location>
</feature>
<feature type="topological domain" description="Cytoplasmic" evidence="1">
    <location>
        <begin position="62"/>
        <end position="74"/>
    </location>
</feature>
<feature type="transmembrane region" description="Helical; Name=2" evidence="1">
    <location>
        <begin position="75"/>
        <end position="95"/>
    </location>
</feature>
<feature type="topological domain" description="Extracellular" evidence="1">
    <location>
        <begin position="96"/>
        <end position="103"/>
    </location>
</feature>
<feature type="transmembrane region" description="Helical; Name=3" evidence="1">
    <location>
        <begin position="104"/>
        <end position="124"/>
    </location>
</feature>
<feature type="topological domain" description="Cytoplasmic" evidence="1">
    <location>
        <begin position="125"/>
        <end position="126"/>
    </location>
</feature>
<feature type="transmembrane region" description="Helical; Name=4" evidence="1">
    <location>
        <begin position="127"/>
        <end position="147"/>
    </location>
</feature>
<feature type="topological domain" description="Extracellular" evidence="1">
    <location>
        <begin position="148"/>
        <end position="160"/>
    </location>
</feature>
<feature type="transmembrane region" description="Helical; Name=5" evidence="1">
    <location>
        <begin position="161"/>
        <end position="181"/>
    </location>
</feature>
<feature type="topological domain" description="Cytoplasmic" evidence="1">
    <location>
        <begin position="182"/>
        <end position="188"/>
    </location>
</feature>
<feature type="transmembrane region" description="Helical; Name=6" evidence="1">
    <location>
        <begin position="189"/>
        <end position="209"/>
    </location>
</feature>
<feature type="topological domain" description="Extracellular" evidence="1">
    <location>
        <begin position="210"/>
        <end position="243"/>
    </location>
</feature>
<feature type="transmembrane region" description="Helical; Name=7" evidence="1">
    <location>
        <begin position="244"/>
        <end position="264"/>
    </location>
</feature>
<feature type="topological domain" description="Cytoplasmic" evidence="1">
    <location>
        <begin position="265"/>
        <end position="284"/>
    </location>
</feature>
<feature type="transmembrane region" description="Helical; Name=8" evidence="1">
    <location>
        <begin position="285"/>
        <end position="305"/>
    </location>
</feature>
<feature type="topological domain" description="Extracellular" evidence="1">
    <location>
        <begin position="306"/>
        <end position="313"/>
    </location>
</feature>
<feature type="transmembrane region" description="Helical; Name=9" evidence="1">
    <location>
        <begin position="314"/>
        <end position="334"/>
    </location>
</feature>
<feature type="topological domain" description="Cytoplasmic" evidence="1">
    <location>
        <begin position="335"/>
        <end position="337"/>
    </location>
</feature>
<feature type="transmembrane region" description="Helical; Name=10" evidence="1">
    <location>
        <begin position="338"/>
        <end position="358"/>
    </location>
</feature>
<feature type="topological domain" description="Extracellular" evidence="1">
    <location>
        <begin position="359"/>
        <end position="379"/>
    </location>
</feature>
<feature type="transmembrane region" description="Helical; Name=11" evidence="1">
    <location>
        <begin position="380"/>
        <end position="400"/>
    </location>
</feature>
<feature type="topological domain" description="Cytoplasmic" evidence="1">
    <location>
        <begin position="401"/>
        <end position="427"/>
    </location>
</feature>
<feature type="transmembrane region" description="Helical; Name=12" evidence="1">
    <location>
        <begin position="428"/>
        <end position="448"/>
    </location>
</feature>
<feature type="topological domain" description="Extracellular" evidence="1">
    <location>
        <begin position="449"/>
        <end position="490"/>
    </location>
</feature>
<feature type="region of interest" description="Disordered" evidence="2">
    <location>
        <begin position="465"/>
        <end position="490"/>
    </location>
</feature>
<feature type="modified residue" description="N-acetylmethionine" evidence="3">
    <location>
        <position position="1"/>
    </location>
</feature>
<feature type="glycosylation site" description="N-linked (GlcNAc...) asparagine" evidence="1">
    <location>
        <position position="12"/>
    </location>
</feature>
<feature type="glycosylation site" description="N-linked (GlcNAc...) asparagine" evidence="1">
    <location>
        <position position="453"/>
    </location>
</feature>
<feature type="sequence conflict" description="In Ref. 1; BAB71375." evidence="4" ref="1">
    <original>V</original>
    <variation>M</variation>
    <location>
        <position position="142"/>
    </location>
</feature>
<feature type="sequence conflict" description="In Ref. 3; CAB70819." evidence="4" ref="3">
    <original>F</original>
    <variation>L</variation>
    <location>
        <position position="447"/>
    </location>
</feature>